<reference key="1">
    <citation type="journal article" date="2009" name="PLoS Genet.">
        <title>Organised genome dynamics in the Escherichia coli species results in highly diverse adaptive paths.</title>
        <authorList>
            <person name="Touchon M."/>
            <person name="Hoede C."/>
            <person name="Tenaillon O."/>
            <person name="Barbe V."/>
            <person name="Baeriswyl S."/>
            <person name="Bidet P."/>
            <person name="Bingen E."/>
            <person name="Bonacorsi S."/>
            <person name="Bouchier C."/>
            <person name="Bouvet O."/>
            <person name="Calteau A."/>
            <person name="Chiapello H."/>
            <person name="Clermont O."/>
            <person name="Cruveiller S."/>
            <person name="Danchin A."/>
            <person name="Diard M."/>
            <person name="Dossat C."/>
            <person name="Karoui M.E."/>
            <person name="Frapy E."/>
            <person name="Garry L."/>
            <person name="Ghigo J.M."/>
            <person name="Gilles A.M."/>
            <person name="Johnson J."/>
            <person name="Le Bouguenec C."/>
            <person name="Lescat M."/>
            <person name="Mangenot S."/>
            <person name="Martinez-Jehanne V."/>
            <person name="Matic I."/>
            <person name="Nassif X."/>
            <person name="Oztas S."/>
            <person name="Petit M.A."/>
            <person name="Pichon C."/>
            <person name="Rouy Z."/>
            <person name="Ruf C.S."/>
            <person name="Schneider D."/>
            <person name="Tourret J."/>
            <person name="Vacherie B."/>
            <person name="Vallenet D."/>
            <person name="Medigue C."/>
            <person name="Rocha E.P.C."/>
            <person name="Denamur E."/>
        </authorList>
    </citation>
    <scope>NUCLEOTIDE SEQUENCE [LARGE SCALE GENOMIC DNA]</scope>
    <source>
        <strain>IAI1</strain>
    </source>
</reference>
<sequence>MNQRNASMTVIGAGSYGTALAITLARNGHEVVLWGHDPEHIATLERDRCNAAFLPDVPFPDTLHLESDLATALAASRNILVVVPSHVFGEVLRQIKPLMRPDARLVWATKGLEAETGRLLQDVAREALGDQIPLAVISGPTFAKELAAGLPTAISLASTDQTFADDLQQLLHCGKSFRVYSNPDFIGVQLGGAVKNVIAIGAGMSDGIGFGANARTALITRGLAEMSRLGAALGADPATFMGMAGLGDLVLTCTDNQSRNRRFGMMLGQGMDVQSAQEKIGQVVEGYRNTKEVRELAHRFGVEMPITEEIYQVLYCGKNAREAALTLLGRARKDERSSH</sequence>
<evidence type="ECO:0000255" key="1">
    <source>
        <dbReference type="HAMAP-Rule" id="MF_00394"/>
    </source>
</evidence>
<keyword id="KW-0963">Cytoplasm</keyword>
<keyword id="KW-0444">Lipid biosynthesis</keyword>
<keyword id="KW-0443">Lipid metabolism</keyword>
<keyword id="KW-0520">NAD</keyword>
<keyword id="KW-0521">NADP</keyword>
<keyword id="KW-0547">Nucleotide-binding</keyword>
<keyword id="KW-0560">Oxidoreductase</keyword>
<keyword id="KW-0594">Phospholipid biosynthesis</keyword>
<keyword id="KW-1208">Phospholipid metabolism</keyword>
<accession>B7M495</accession>
<protein>
    <recommendedName>
        <fullName evidence="1">Glycerol-3-phosphate dehydrogenase [NAD(P)+]</fullName>
        <ecNumber evidence="1">1.1.1.94</ecNumber>
    </recommendedName>
    <alternativeName>
        <fullName evidence="1">NAD(P)(+)-dependent glycerol-3-phosphate dehydrogenase</fullName>
    </alternativeName>
    <alternativeName>
        <fullName evidence="1">NAD(P)H-dependent dihydroxyacetone-phosphate reductase</fullName>
    </alternativeName>
</protein>
<name>GPDA_ECO8A</name>
<feature type="chain" id="PRO_1000190148" description="Glycerol-3-phosphate dehydrogenase [NAD(P)+]">
    <location>
        <begin position="1"/>
        <end position="339"/>
    </location>
</feature>
<feature type="active site" description="Proton acceptor" evidence="1">
    <location>
        <position position="195"/>
    </location>
</feature>
<feature type="binding site" evidence="1">
    <location>
        <position position="15"/>
    </location>
    <ligand>
        <name>NADPH</name>
        <dbReference type="ChEBI" id="CHEBI:57783"/>
    </ligand>
</feature>
<feature type="binding site" evidence="1">
    <location>
        <position position="16"/>
    </location>
    <ligand>
        <name>NADPH</name>
        <dbReference type="ChEBI" id="CHEBI:57783"/>
    </ligand>
</feature>
<feature type="binding site" evidence="1">
    <location>
        <position position="36"/>
    </location>
    <ligand>
        <name>NADPH</name>
        <dbReference type="ChEBI" id="CHEBI:57783"/>
    </ligand>
</feature>
<feature type="binding site" evidence="1">
    <location>
        <position position="110"/>
    </location>
    <ligand>
        <name>NADPH</name>
        <dbReference type="ChEBI" id="CHEBI:57783"/>
    </ligand>
</feature>
<feature type="binding site" evidence="1">
    <location>
        <position position="110"/>
    </location>
    <ligand>
        <name>sn-glycerol 3-phosphate</name>
        <dbReference type="ChEBI" id="CHEBI:57597"/>
    </ligand>
</feature>
<feature type="binding site" evidence="1">
    <location>
        <position position="139"/>
    </location>
    <ligand>
        <name>sn-glycerol 3-phosphate</name>
        <dbReference type="ChEBI" id="CHEBI:57597"/>
    </ligand>
</feature>
<feature type="binding site" evidence="1">
    <location>
        <position position="141"/>
    </location>
    <ligand>
        <name>sn-glycerol 3-phosphate</name>
        <dbReference type="ChEBI" id="CHEBI:57597"/>
    </ligand>
</feature>
<feature type="binding site" evidence="1">
    <location>
        <position position="143"/>
    </location>
    <ligand>
        <name>NADPH</name>
        <dbReference type="ChEBI" id="CHEBI:57783"/>
    </ligand>
</feature>
<feature type="binding site" evidence="1">
    <location>
        <position position="195"/>
    </location>
    <ligand>
        <name>sn-glycerol 3-phosphate</name>
        <dbReference type="ChEBI" id="CHEBI:57597"/>
    </ligand>
</feature>
<feature type="binding site" evidence="1">
    <location>
        <position position="248"/>
    </location>
    <ligand>
        <name>sn-glycerol 3-phosphate</name>
        <dbReference type="ChEBI" id="CHEBI:57597"/>
    </ligand>
</feature>
<feature type="binding site" evidence="1">
    <location>
        <position position="258"/>
    </location>
    <ligand>
        <name>sn-glycerol 3-phosphate</name>
        <dbReference type="ChEBI" id="CHEBI:57597"/>
    </ligand>
</feature>
<feature type="binding site" evidence="1">
    <location>
        <position position="259"/>
    </location>
    <ligand>
        <name>NADPH</name>
        <dbReference type="ChEBI" id="CHEBI:57783"/>
    </ligand>
</feature>
<feature type="binding site" evidence="1">
    <location>
        <position position="259"/>
    </location>
    <ligand>
        <name>sn-glycerol 3-phosphate</name>
        <dbReference type="ChEBI" id="CHEBI:57597"/>
    </ligand>
</feature>
<feature type="binding site" evidence="1">
    <location>
        <position position="260"/>
    </location>
    <ligand>
        <name>sn-glycerol 3-phosphate</name>
        <dbReference type="ChEBI" id="CHEBI:57597"/>
    </ligand>
</feature>
<feature type="binding site" evidence="1">
    <location>
        <position position="283"/>
    </location>
    <ligand>
        <name>NADPH</name>
        <dbReference type="ChEBI" id="CHEBI:57783"/>
    </ligand>
</feature>
<feature type="binding site" evidence="1">
    <location>
        <position position="285"/>
    </location>
    <ligand>
        <name>NADPH</name>
        <dbReference type="ChEBI" id="CHEBI:57783"/>
    </ligand>
</feature>
<dbReference type="EC" id="1.1.1.94" evidence="1"/>
<dbReference type="EMBL" id="CU928160">
    <property type="protein sequence ID" value="CAR00578.1"/>
    <property type="molecule type" value="Genomic_DNA"/>
</dbReference>
<dbReference type="RefSeq" id="WP_001076194.1">
    <property type="nucleotide sequence ID" value="NC_011741.1"/>
</dbReference>
<dbReference type="SMR" id="B7M495"/>
<dbReference type="GeneID" id="93778322"/>
<dbReference type="KEGG" id="ecr:ECIAI1_3781"/>
<dbReference type="HOGENOM" id="CLU_033449_0_2_6"/>
<dbReference type="UniPathway" id="UPA00940"/>
<dbReference type="GO" id="GO:0005829">
    <property type="term" value="C:cytosol"/>
    <property type="evidence" value="ECO:0007669"/>
    <property type="project" value="TreeGrafter"/>
</dbReference>
<dbReference type="GO" id="GO:0047952">
    <property type="term" value="F:glycerol-3-phosphate dehydrogenase [NAD(P)+] activity"/>
    <property type="evidence" value="ECO:0007669"/>
    <property type="project" value="UniProtKB-UniRule"/>
</dbReference>
<dbReference type="GO" id="GO:0051287">
    <property type="term" value="F:NAD binding"/>
    <property type="evidence" value="ECO:0007669"/>
    <property type="project" value="InterPro"/>
</dbReference>
<dbReference type="GO" id="GO:0005975">
    <property type="term" value="P:carbohydrate metabolic process"/>
    <property type="evidence" value="ECO:0007669"/>
    <property type="project" value="InterPro"/>
</dbReference>
<dbReference type="GO" id="GO:0046167">
    <property type="term" value="P:glycerol-3-phosphate biosynthetic process"/>
    <property type="evidence" value="ECO:0007669"/>
    <property type="project" value="UniProtKB-UniRule"/>
</dbReference>
<dbReference type="GO" id="GO:0046168">
    <property type="term" value="P:glycerol-3-phosphate catabolic process"/>
    <property type="evidence" value="ECO:0007669"/>
    <property type="project" value="InterPro"/>
</dbReference>
<dbReference type="GO" id="GO:0046474">
    <property type="term" value="P:glycerophospholipid biosynthetic process"/>
    <property type="evidence" value="ECO:0007669"/>
    <property type="project" value="TreeGrafter"/>
</dbReference>
<dbReference type="FunFam" id="1.10.1040.10:FF:000001">
    <property type="entry name" value="Glycerol-3-phosphate dehydrogenase [NAD(P)+]"/>
    <property type="match status" value="1"/>
</dbReference>
<dbReference type="FunFam" id="3.40.50.720:FF:000019">
    <property type="entry name" value="Glycerol-3-phosphate dehydrogenase [NAD(P)+]"/>
    <property type="match status" value="1"/>
</dbReference>
<dbReference type="Gene3D" id="1.10.1040.10">
    <property type="entry name" value="N-(1-d-carboxylethyl)-l-norvaline Dehydrogenase, domain 2"/>
    <property type="match status" value="1"/>
</dbReference>
<dbReference type="Gene3D" id="3.40.50.720">
    <property type="entry name" value="NAD(P)-binding Rossmann-like Domain"/>
    <property type="match status" value="1"/>
</dbReference>
<dbReference type="HAMAP" id="MF_00394">
    <property type="entry name" value="NAD_Glyc3P_dehydrog"/>
    <property type="match status" value="1"/>
</dbReference>
<dbReference type="InterPro" id="IPR008927">
    <property type="entry name" value="6-PGluconate_DH-like_C_sf"/>
</dbReference>
<dbReference type="InterPro" id="IPR013328">
    <property type="entry name" value="6PGD_dom2"/>
</dbReference>
<dbReference type="InterPro" id="IPR006168">
    <property type="entry name" value="G3P_DH_NAD-dep"/>
</dbReference>
<dbReference type="InterPro" id="IPR006109">
    <property type="entry name" value="G3P_DH_NAD-dep_C"/>
</dbReference>
<dbReference type="InterPro" id="IPR011128">
    <property type="entry name" value="G3P_DH_NAD-dep_N"/>
</dbReference>
<dbReference type="InterPro" id="IPR036291">
    <property type="entry name" value="NAD(P)-bd_dom_sf"/>
</dbReference>
<dbReference type="NCBIfam" id="NF000939">
    <property type="entry name" value="PRK00094.1-1"/>
    <property type="match status" value="1"/>
</dbReference>
<dbReference type="NCBIfam" id="NF000940">
    <property type="entry name" value="PRK00094.1-2"/>
    <property type="match status" value="1"/>
</dbReference>
<dbReference type="NCBIfam" id="NF000942">
    <property type="entry name" value="PRK00094.1-4"/>
    <property type="match status" value="1"/>
</dbReference>
<dbReference type="PANTHER" id="PTHR11728">
    <property type="entry name" value="GLYCEROL-3-PHOSPHATE DEHYDROGENASE"/>
    <property type="match status" value="1"/>
</dbReference>
<dbReference type="PANTHER" id="PTHR11728:SF1">
    <property type="entry name" value="GLYCEROL-3-PHOSPHATE DEHYDROGENASE [NAD(+)] 2, CHLOROPLASTIC"/>
    <property type="match status" value="1"/>
</dbReference>
<dbReference type="Pfam" id="PF07479">
    <property type="entry name" value="NAD_Gly3P_dh_C"/>
    <property type="match status" value="1"/>
</dbReference>
<dbReference type="Pfam" id="PF01210">
    <property type="entry name" value="NAD_Gly3P_dh_N"/>
    <property type="match status" value="1"/>
</dbReference>
<dbReference type="PIRSF" id="PIRSF000114">
    <property type="entry name" value="Glycerol-3-P_dh"/>
    <property type="match status" value="1"/>
</dbReference>
<dbReference type="PRINTS" id="PR00077">
    <property type="entry name" value="GPDHDRGNASE"/>
</dbReference>
<dbReference type="SUPFAM" id="SSF48179">
    <property type="entry name" value="6-phosphogluconate dehydrogenase C-terminal domain-like"/>
    <property type="match status" value="1"/>
</dbReference>
<dbReference type="SUPFAM" id="SSF51735">
    <property type="entry name" value="NAD(P)-binding Rossmann-fold domains"/>
    <property type="match status" value="1"/>
</dbReference>
<dbReference type="PROSITE" id="PS00957">
    <property type="entry name" value="NAD_G3PDH"/>
    <property type="match status" value="1"/>
</dbReference>
<organism>
    <name type="scientific">Escherichia coli O8 (strain IAI1)</name>
    <dbReference type="NCBI Taxonomy" id="585034"/>
    <lineage>
        <taxon>Bacteria</taxon>
        <taxon>Pseudomonadati</taxon>
        <taxon>Pseudomonadota</taxon>
        <taxon>Gammaproteobacteria</taxon>
        <taxon>Enterobacterales</taxon>
        <taxon>Enterobacteriaceae</taxon>
        <taxon>Escherichia</taxon>
    </lineage>
</organism>
<proteinExistence type="inferred from homology"/>
<comment type="function">
    <text evidence="1">Catalyzes the reduction of the glycolytic intermediate dihydroxyacetone phosphate (DHAP) to sn-glycerol 3-phosphate (G3P), the key precursor for phospholipid synthesis.</text>
</comment>
<comment type="catalytic activity">
    <reaction evidence="1">
        <text>sn-glycerol 3-phosphate + NAD(+) = dihydroxyacetone phosphate + NADH + H(+)</text>
        <dbReference type="Rhea" id="RHEA:11092"/>
        <dbReference type="ChEBI" id="CHEBI:15378"/>
        <dbReference type="ChEBI" id="CHEBI:57540"/>
        <dbReference type="ChEBI" id="CHEBI:57597"/>
        <dbReference type="ChEBI" id="CHEBI:57642"/>
        <dbReference type="ChEBI" id="CHEBI:57945"/>
        <dbReference type="EC" id="1.1.1.94"/>
    </reaction>
    <physiologicalReaction direction="right-to-left" evidence="1">
        <dbReference type="Rhea" id="RHEA:11094"/>
    </physiologicalReaction>
</comment>
<comment type="catalytic activity">
    <reaction evidence="1">
        <text>sn-glycerol 3-phosphate + NADP(+) = dihydroxyacetone phosphate + NADPH + H(+)</text>
        <dbReference type="Rhea" id="RHEA:11096"/>
        <dbReference type="ChEBI" id="CHEBI:15378"/>
        <dbReference type="ChEBI" id="CHEBI:57597"/>
        <dbReference type="ChEBI" id="CHEBI:57642"/>
        <dbReference type="ChEBI" id="CHEBI:57783"/>
        <dbReference type="ChEBI" id="CHEBI:58349"/>
        <dbReference type="EC" id="1.1.1.94"/>
    </reaction>
    <physiologicalReaction direction="right-to-left" evidence="1">
        <dbReference type="Rhea" id="RHEA:11098"/>
    </physiologicalReaction>
</comment>
<comment type="pathway">
    <text evidence="1">Membrane lipid metabolism; glycerophospholipid metabolism.</text>
</comment>
<comment type="subcellular location">
    <subcellularLocation>
        <location evidence="1">Cytoplasm</location>
    </subcellularLocation>
</comment>
<comment type="similarity">
    <text evidence="1">Belongs to the NAD-dependent glycerol-3-phosphate dehydrogenase family.</text>
</comment>
<gene>
    <name evidence="1" type="primary">gpsA</name>
    <name type="ordered locus">ECIAI1_3781</name>
</gene>